<sequence>MAITKSTPAPLTGGTLWCVTIALSLATFMQMLDSTISNVAIPTISGFLGASTDEGTWVITSFGVANAIAIPVTGRLAQRIGELRLFLLSVTFFSLSSLMCSLSTNLDVLIFFRVVQGLMAGPLIPLSQSLLLRNYPPEKRTFALALWSMTVIIAPICGPILGGYICDNFSWGWIFLINVPMGIIVLTLCLTLLKGRETETSPVKMNLPGLTLLVLGVGGLQIMLDKGRDLDWFNSSTIIILTVVSVISLISLVIWESTSENPILDLSLFKSRNFTIGIVSITCAYLFYSGAIVLMPQLLQETMGYNAIWAGLAYAPIGIMPLLISPLIGRYGNKIDMRLLVTFSFLMYAVCYYWRSVTFMPTIDFTGIILPQFFQGFAVACFFLPLTTISFSGLPDNKFANASSMSNFFRTLSGSVGTSLTMTLWGRRESLHHSQLTATIDQFNPVFNSSSQIMDKYYGSLSGVLNEINNEITQQSLSISANEIFRMAAIAFILLTVLVWFAKPPFTAKGVG</sequence>
<keyword id="KW-0997">Cell inner membrane</keyword>
<keyword id="KW-1003">Cell membrane</keyword>
<keyword id="KW-0472">Membrane</keyword>
<keyword id="KW-1185">Reference proteome</keyword>
<keyword id="KW-0812">Transmembrane</keyword>
<keyword id="KW-1133">Transmembrane helix</keyword>
<keyword id="KW-0813">Transport</keyword>
<evidence type="ECO:0000250" key="1"/>
<evidence type="ECO:0000255" key="2"/>
<evidence type="ECO:0000269" key="3">
    <source>
    </source>
</evidence>
<evidence type="ECO:0000269" key="4">
    <source>
    </source>
</evidence>
<evidence type="ECO:0000269" key="5">
    <source>
    </source>
</evidence>
<evidence type="ECO:0000305" key="6"/>
<protein>
    <recommendedName>
        <fullName>Probable multidrug resistance protein EmrY</fullName>
    </recommendedName>
</protein>
<gene>
    <name type="primary">emrY</name>
    <name type="ordered locus">b2367</name>
    <name type="ordered locus">JW2364</name>
</gene>
<dbReference type="EMBL" id="D78168">
    <property type="protein sequence ID" value="BAA11237.1"/>
    <property type="molecule type" value="Genomic_DNA"/>
</dbReference>
<dbReference type="EMBL" id="U00096">
    <property type="protein sequence ID" value="AAC75426.1"/>
    <property type="molecule type" value="Genomic_DNA"/>
</dbReference>
<dbReference type="EMBL" id="AP009048">
    <property type="protein sequence ID" value="BAA16230.1"/>
    <property type="molecule type" value="Genomic_DNA"/>
</dbReference>
<dbReference type="PIR" id="D65010">
    <property type="entry name" value="D65010"/>
</dbReference>
<dbReference type="RefSeq" id="NP_416868.1">
    <property type="nucleotide sequence ID" value="NC_000913.3"/>
</dbReference>
<dbReference type="RefSeq" id="WP_001018714.1">
    <property type="nucleotide sequence ID" value="NZ_SSZK01000006.1"/>
</dbReference>
<dbReference type="SMR" id="P52600"/>
<dbReference type="BioGRID" id="4260556">
    <property type="interactions" value="101"/>
</dbReference>
<dbReference type="ComplexPortal" id="CPX-4273">
    <property type="entry name" value="EmrKY-TolC multidrug efflux transport system"/>
</dbReference>
<dbReference type="DIP" id="DIP-9507N"/>
<dbReference type="FunCoup" id="P52600">
    <property type="interactions" value="472"/>
</dbReference>
<dbReference type="IntAct" id="P52600">
    <property type="interactions" value="2"/>
</dbReference>
<dbReference type="STRING" id="511145.b2367"/>
<dbReference type="CARD" id="ARO:3000254">
    <property type="molecule name" value="emrY"/>
    <property type="mechanism identifier" value="ARO:0010000"/>
    <property type="mechanism name" value="antibiotic efflux"/>
</dbReference>
<dbReference type="PaxDb" id="511145-b2367"/>
<dbReference type="EnsemblBacteria" id="AAC75426">
    <property type="protein sequence ID" value="AAC75426"/>
    <property type="gene ID" value="b2367"/>
</dbReference>
<dbReference type="GeneID" id="93774762"/>
<dbReference type="GeneID" id="946835"/>
<dbReference type="KEGG" id="ecj:JW2364"/>
<dbReference type="KEGG" id="eco:b2367"/>
<dbReference type="KEGG" id="ecoc:C3026_13165"/>
<dbReference type="PATRIC" id="fig|1411691.4.peg.4362"/>
<dbReference type="EchoBASE" id="EB3068"/>
<dbReference type="eggNOG" id="COG0477">
    <property type="taxonomic scope" value="Bacteria"/>
</dbReference>
<dbReference type="HOGENOM" id="CLU_000960_28_0_6"/>
<dbReference type="InParanoid" id="P52600"/>
<dbReference type="OMA" id="HWIFWIS"/>
<dbReference type="OrthoDB" id="9812221at2"/>
<dbReference type="PhylomeDB" id="P52600"/>
<dbReference type="BioCyc" id="EcoCyc:EMRY-MONOMER"/>
<dbReference type="BioCyc" id="MetaCyc:EMRY-MONOMER"/>
<dbReference type="PRO" id="PR:P52600"/>
<dbReference type="Proteomes" id="UP000000625">
    <property type="component" value="Chromosome"/>
</dbReference>
<dbReference type="GO" id="GO:1990281">
    <property type="term" value="C:efflux pump complex"/>
    <property type="evidence" value="ECO:0000303"/>
    <property type="project" value="ComplexPortal"/>
</dbReference>
<dbReference type="GO" id="GO:0098567">
    <property type="term" value="C:periplasmic side of plasma membrane"/>
    <property type="evidence" value="ECO:0000303"/>
    <property type="project" value="ComplexPortal"/>
</dbReference>
<dbReference type="GO" id="GO:0005886">
    <property type="term" value="C:plasma membrane"/>
    <property type="evidence" value="ECO:0000314"/>
    <property type="project" value="EcoCyc"/>
</dbReference>
<dbReference type="GO" id="GO:0022857">
    <property type="term" value="F:transmembrane transporter activity"/>
    <property type="evidence" value="ECO:0000318"/>
    <property type="project" value="GO_Central"/>
</dbReference>
<dbReference type="GO" id="GO:0015721">
    <property type="term" value="P:bile acid and bile salt transport"/>
    <property type="evidence" value="ECO:0000315"/>
    <property type="project" value="EcoCyc"/>
</dbReference>
<dbReference type="GO" id="GO:0006974">
    <property type="term" value="P:DNA damage response"/>
    <property type="evidence" value="ECO:0000315"/>
    <property type="project" value="EcoCyc"/>
</dbReference>
<dbReference type="GO" id="GO:0046677">
    <property type="term" value="P:response to antibiotic"/>
    <property type="evidence" value="ECO:0000315"/>
    <property type="project" value="EcoCyc"/>
</dbReference>
<dbReference type="GO" id="GO:0055085">
    <property type="term" value="P:transmembrane transport"/>
    <property type="evidence" value="ECO:0000318"/>
    <property type="project" value="GO_Central"/>
</dbReference>
<dbReference type="GO" id="GO:0140330">
    <property type="term" value="P:xenobiotic detoxification by transmembrane export across the cell outer membrane"/>
    <property type="evidence" value="ECO:0000303"/>
    <property type="project" value="ComplexPortal"/>
</dbReference>
<dbReference type="GO" id="GO:1990961">
    <property type="term" value="P:xenobiotic detoxification by transmembrane export across the plasma membrane"/>
    <property type="evidence" value="ECO:0000314"/>
    <property type="project" value="EcoCyc"/>
</dbReference>
<dbReference type="CDD" id="cd17503">
    <property type="entry name" value="MFS_LmrB_MDR_like"/>
    <property type="match status" value="1"/>
</dbReference>
<dbReference type="FunFam" id="1.20.1720.10:FF:000002">
    <property type="entry name" value="Multidrug resistance protein B"/>
    <property type="match status" value="1"/>
</dbReference>
<dbReference type="Gene3D" id="1.20.1250.20">
    <property type="entry name" value="MFS general substrate transporter like domains"/>
    <property type="match status" value="1"/>
</dbReference>
<dbReference type="Gene3D" id="1.20.1720.10">
    <property type="entry name" value="Multidrug resistance protein D"/>
    <property type="match status" value="1"/>
</dbReference>
<dbReference type="InterPro" id="IPR004638">
    <property type="entry name" value="EmrB-like"/>
</dbReference>
<dbReference type="InterPro" id="IPR011701">
    <property type="entry name" value="MFS"/>
</dbReference>
<dbReference type="InterPro" id="IPR020846">
    <property type="entry name" value="MFS_dom"/>
</dbReference>
<dbReference type="InterPro" id="IPR036259">
    <property type="entry name" value="MFS_trans_sf"/>
</dbReference>
<dbReference type="NCBIfam" id="TIGR00711">
    <property type="entry name" value="efflux_EmrB"/>
    <property type="match status" value="1"/>
</dbReference>
<dbReference type="PANTHER" id="PTHR42718">
    <property type="entry name" value="MAJOR FACILITATOR SUPERFAMILY MULTIDRUG TRANSPORTER MFSC"/>
    <property type="match status" value="1"/>
</dbReference>
<dbReference type="PANTHER" id="PTHR42718:SF9">
    <property type="entry name" value="MAJOR FACILITATOR SUPERFAMILY MULTIDRUG TRANSPORTER MFSC"/>
    <property type="match status" value="1"/>
</dbReference>
<dbReference type="Pfam" id="PF07690">
    <property type="entry name" value="MFS_1"/>
    <property type="match status" value="1"/>
</dbReference>
<dbReference type="SUPFAM" id="SSF103473">
    <property type="entry name" value="MFS general substrate transporter"/>
    <property type="match status" value="1"/>
</dbReference>
<dbReference type="PROSITE" id="PS50850">
    <property type="entry name" value="MFS"/>
    <property type="match status" value="1"/>
</dbReference>
<accession>P52600</accession>
<proteinExistence type="evidence at transcript level"/>
<reference key="1">
    <citation type="submission" date="1995-11" db="EMBL/GenBank/DDBJ databases">
        <title>Analysis and characterization of the upstream region of evgA and evgS.</title>
        <authorList>
            <person name="Utsumi R."/>
        </authorList>
    </citation>
    <scope>NUCLEOTIDE SEQUENCE [GENOMIC DNA]</scope>
</reference>
<reference key="2">
    <citation type="journal article" date="1997" name="DNA Res.">
        <title>Construction of a contiguous 874-kb sequence of the Escherichia coli-K12 genome corresponding to 50.0-68.8 min on the linkage map and analysis of its sequence features.</title>
        <authorList>
            <person name="Yamamoto Y."/>
            <person name="Aiba H."/>
            <person name="Baba T."/>
            <person name="Hayashi K."/>
            <person name="Inada T."/>
            <person name="Isono K."/>
            <person name="Itoh T."/>
            <person name="Kimura S."/>
            <person name="Kitagawa M."/>
            <person name="Makino K."/>
            <person name="Miki T."/>
            <person name="Mitsuhashi N."/>
            <person name="Mizobuchi K."/>
            <person name="Mori H."/>
            <person name="Nakade S."/>
            <person name="Nakamura Y."/>
            <person name="Nashimoto H."/>
            <person name="Oshima T."/>
            <person name="Oyama S."/>
            <person name="Saito N."/>
            <person name="Sampei G."/>
            <person name="Satoh Y."/>
            <person name="Sivasundaram S."/>
            <person name="Tagami H."/>
            <person name="Takahashi H."/>
            <person name="Takeda J."/>
            <person name="Takemoto K."/>
            <person name="Uehara K."/>
            <person name="Wada C."/>
            <person name="Yamagata S."/>
            <person name="Horiuchi T."/>
        </authorList>
    </citation>
    <scope>NUCLEOTIDE SEQUENCE [LARGE SCALE GENOMIC DNA]</scope>
    <source>
        <strain>K12 / W3110 / ATCC 27325 / DSM 5911</strain>
    </source>
</reference>
<reference key="3">
    <citation type="journal article" date="1997" name="Science">
        <title>The complete genome sequence of Escherichia coli K-12.</title>
        <authorList>
            <person name="Blattner F.R."/>
            <person name="Plunkett G. III"/>
            <person name="Bloch C.A."/>
            <person name="Perna N.T."/>
            <person name="Burland V."/>
            <person name="Riley M."/>
            <person name="Collado-Vides J."/>
            <person name="Glasner J.D."/>
            <person name="Rode C.K."/>
            <person name="Mayhew G.F."/>
            <person name="Gregor J."/>
            <person name="Davis N.W."/>
            <person name="Kirkpatrick H.A."/>
            <person name="Goeden M.A."/>
            <person name="Rose D.J."/>
            <person name="Mau B."/>
            <person name="Shao Y."/>
        </authorList>
    </citation>
    <scope>NUCLEOTIDE SEQUENCE [LARGE SCALE GENOMIC DNA]</scope>
    <source>
        <strain>K12 / MG1655 / ATCC 47076</strain>
    </source>
</reference>
<reference key="4">
    <citation type="journal article" date="2006" name="Mol. Syst. Biol.">
        <title>Highly accurate genome sequences of Escherichia coli K-12 strains MG1655 and W3110.</title>
        <authorList>
            <person name="Hayashi K."/>
            <person name="Morooka N."/>
            <person name="Yamamoto Y."/>
            <person name="Fujita K."/>
            <person name="Isono K."/>
            <person name="Choi S."/>
            <person name="Ohtsubo E."/>
            <person name="Baba T."/>
            <person name="Wanner B.L."/>
            <person name="Mori H."/>
            <person name="Horiuchi T."/>
        </authorList>
    </citation>
    <scope>NUCLEOTIDE SEQUENCE [LARGE SCALE GENOMIC DNA]</scope>
    <source>
        <strain>K12 / W3110 / ATCC 27325 / DSM 5911</strain>
    </source>
</reference>
<reference key="5">
    <citation type="journal article" date="1997" name="J. Gen. Appl. Microbiol.">
        <title>Growth phase-dependent transcription of emrKY, a homolog of multidrug efflux emrAB genes of Escherichia coli, is induced by tetracycline.</title>
        <authorList>
            <person name="Tanabe H."/>
            <person name="Yamasak K."/>
            <person name="Furue M."/>
            <person name="Yamamoto K."/>
            <person name="Katoh A."/>
            <person name="Yamamoto M."/>
            <person name="Yoshioka S."/>
            <person name="Tagami H."/>
            <person name="Aiba H.A."/>
            <person name="Utsumi R."/>
        </authorList>
    </citation>
    <scope>INDUCTION</scope>
    <source>
        <strain>K12 / MC4100 / ATCC 35695 / DSM 6574</strain>
    </source>
</reference>
<reference key="6">
    <citation type="journal article" date="2005" name="Science">
        <title>Global topology analysis of the Escherichia coli inner membrane proteome.</title>
        <authorList>
            <person name="Daley D.O."/>
            <person name="Rapp M."/>
            <person name="Granseth E."/>
            <person name="Melen K."/>
            <person name="Drew D."/>
            <person name="von Heijne G."/>
        </authorList>
    </citation>
    <scope>SUBCELLULAR LOCATION</scope>
    <source>
        <strain>K12 / MG1655 / ATCC 47076</strain>
    </source>
</reference>
<reference key="7">
    <citation type="journal article" date="2010" name="BMC Microbiol.">
        <title>Escherichia coli genes that reduce the lethal effects of stress.</title>
        <authorList>
            <person name="Han X."/>
            <person name="Dorsey-Oresto A."/>
            <person name="Malik M."/>
            <person name="Wang J.Y."/>
            <person name="Drlica K."/>
            <person name="Zhao X."/>
            <person name="Lu T."/>
        </authorList>
    </citation>
    <scope>DISRUPTION PHENOTYPE</scope>
    <source>
        <strain>K12</strain>
    </source>
</reference>
<name>EMRY_ECOLI</name>
<comment type="function">
    <text evidence="1">Part of the tripartite efflux system EmrYK-TolC, which confers resistance to various drugs.</text>
</comment>
<comment type="subunit">
    <text evidence="1">Part of the tripartite efflux system EmrYK-TolC, which is composed of an inner membrane transporter, EmrY, a membrane fusion protein, EmrK, and an outer membrane component, TolC. The complex forms a large protein conduit and can translocate molecules across both the inner and outer membranes (By similarity).</text>
</comment>
<comment type="subcellular location">
    <subcellularLocation>
        <location evidence="4">Cell inner membrane</location>
        <topology evidence="4">Multi-pass membrane protein</topology>
    </subcellularLocation>
</comment>
<comment type="induction">
    <text evidence="3">Growth phase-dependent transcription is induced by tetracycline. Expression may be controlled by both RpoS and the Mar system.</text>
</comment>
<comment type="disruption phenotype">
    <text evidence="5">Mutants are more sensitive to nalidixic acid, mitomycin C and other stresses such as hydrogen peroxide or UV irradiation.</text>
</comment>
<comment type="similarity">
    <text evidence="6">Belongs to the major facilitator superfamily. EmrB family.</text>
</comment>
<feature type="chain" id="PRO_0000173325" description="Probable multidrug resistance protein EmrY">
    <location>
        <begin position="1"/>
        <end position="512"/>
    </location>
</feature>
<feature type="topological domain" description="Cytoplasmic" evidence="2">
    <location>
        <begin position="1"/>
        <end position="8"/>
    </location>
</feature>
<feature type="transmembrane region" description="Helical" evidence="2">
    <location>
        <begin position="9"/>
        <end position="29"/>
    </location>
</feature>
<feature type="topological domain" description="Periplasmic" evidence="2">
    <location>
        <position position="30"/>
    </location>
</feature>
<feature type="transmembrane region" description="Helical" evidence="2">
    <location>
        <begin position="31"/>
        <end position="51"/>
    </location>
</feature>
<feature type="topological domain" description="Cytoplasmic" evidence="2">
    <location>
        <begin position="52"/>
        <end position="53"/>
    </location>
</feature>
<feature type="transmembrane region" description="Helical" evidence="2">
    <location>
        <begin position="54"/>
        <end position="74"/>
    </location>
</feature>
<feature type="topological domain" description="Periplasmic" evidence="2">
    <location>
        <begin position="75"/>
        <end position="84"/>
    </location>
</feature>
<feature type="transmembrane region" description="Helical" evidence="2">
    <location>
        <begin position="85"/>
        <end position="105"/>
    </location>
</feature>
<feature type="transmembrane region" description="Helical" evidence="2">
    <location>
        <begin position="106"/>
        <end position="126"/>
    </location>
</feature>
<feature type="topological domain" description="Periplasmic" evidence="2">
    <location>
        <begin position="127"/>
        <end position="141"/>
    </location>
</feature>
<feature type="transmembrane region" description="Helical" evidence="2">
    <location>
        <begin position="142"/>
        <end position="162"/>
    </location>
</feature>
<feature type="topological domain" description="Cytoplasmic" evidence="2">
    <location>
        <begin position="163"/>
        <end position="172"/>
    </location>
</feature>
<feature type="transmembrane region" description="Helical" evidence="2">
    <location>
        <begin position="173"/>
        <end position="193"/>
    </location>
</feature>
<feature type="topological domain" description="Periplasmic" evidence="2">
    <location>
        <begin position="194"/>
        <end position="204"/>
    </location>
</feature>
<feature type="transmembrane region" description="Helical" evidence="2">
    <location>
        <begin position="205"/>
        <end position="225"/>
    </location>
</feature>
<feature type="topological domain" description="Cytoplasmic" evidence="2">
    <location>
        <begin position="226"/>
        <end position="234"/>
    </location>
</feature>
<feature type="transmembrane region" description="Helical" evidence="2">
    <location>
        <begin position="235"/>
        <end position="255"/>
    </location>
</feature>
<feature type="topological domain" description="Periplasmic" evidence="2">
    <location>
        <begin position="256"/>
        <end position="273"/>
    </location>
</feature>
<feature type="transmembrane region" description="Helical" evidence="2">
    <location>
        <begin position="274"/>
        <end position="294"/>
    </location>
</feature>
<feature type="topological domain" description="Cytoplasmic" evidence="2">
    <location>
        <begin position="295"/>
        <end position="307"/>
    </location>
</feature>
<feature type="transmembrane region" description="Helical" evidence="2">
    <location>
        <begin position="308"/>
        <end position="328"/>
    </location>
</feature>
<feature type="topological domain" description="Periplasmic" evidence="2">
    <location>
        <begin position="329"/>
        <end position="338"/>
    </location>
</feature>
<feature type="transmembrane region" description="Helical" evidence="2">
    <location>
        <begin position="339"/>
        <end position="359"/>
    </location>
</feature>
<feature type="topological domain" description="Cytoplasmic" evidence="2">
    <location>
        <begin position="360"/>
        <end position="364"/>
    </location>
</feature>
<feature type="transmembrane region" description="Helical" evidence="2">
    <location>
        <begin position="365"/>
        <end position="385"/>
    </location>
</feature>
<feature type="topological domain" description="Periplasmic" evidence="2">
    <location>
        <begin position="386"/>
        <end position="486"/>
    </location>
</feature>
<feature type="transmembrane region" description="Helical" evidence="2">
    <location>
        <begin position="487"/>
        <end position="507"/>
    </location>
</feature>
<feature type="topological domain" description="Cytoplasmic" evidence="2">
    <location>
        <begin position="508"/>
        <end position="512"/>
    </location>
</feature>
<organism>
    <name type="scientific">Escherichia coli (strain K12)</name>
    <dbReference type="NCBI Taxonomy" id="83333"/>
    <lineage>
        <taxon>Bacteria</taxon>
        <taxon>Pseudomonadati</taxon>
        <taxon>Pseudomonadota</taxon>
        <taxon>Gammaproteobacteria</taxon>
        <taxon>Enterobacterales</taxon>
        <taxon>Enterobacteriaceae</taxon>
        <taxon>Escherichia</taxon>
    </lineage>
</organism>